<evidence type="ECO:0000255" key="1">
    <source>
        <dbReference type="HAMAP-Rule" id="MF_00052"/>
    </source>
</evidence>
<evidence type="ECO:0000255" key="2">
    <source>
        <dbReference type="PROSITE-ProRule" id="PRU01319"/>
    </source>
</evidence>
<gene>
    <name evidence="1" type="primary">rnhB</name>
    <name type="ordered locus">SPAB_00294</name>
</gene>
<comment type="function">
    <text evidence="1">Endonuclease that specifically degrades the RNA of RNA-DNA hybrids.</text>
</comment>
<comment type="catalytic activity">
    <reaction evidence="1">
        <text>Endonucleolytic cleavage to 5'-phosphomonoester.</text>
        <dbReference type="EC" id="3.1.26.4"/>
    </reaction>
</comment>
<comment type="cofactor">
    <cofactor evidence="1">
        <name>Mn(2+)</name>
        <dbReference type="ChEBI" id="CHEBI:29035"/>
    </cofactor>
    <cofactor evidence="1">
        <name>Mg(2+)</name>
        <dbReference type="ChEBI" id="CHEBI:18420"/>
    </cofactor>
    <text evidence="1">Manganese or magnesium. Binds 1 divalent metal ion per monomer in the absence of substrate. May bind a second metal ion after substrate binding.</text>
</comment>
<comment type="subcellular location">
    <subcellularLocation>
        <location evidence="1">Cytoplasm</location>
    </subcellularLocation>
</comment>
<comment type="similarity">
    <text evidence="1">Belongs to the RNase HII family.</text>
</comment>
<organism>
    <name type="scientific">Salmonella paratyphi B (strain ATCC BAA-1250 / SPB7)</name>
    <dbReference type="NCBI Taxonomy" id="1016998"/>
    <lineage>
        <taxon>Bacteria</taxon>
        <taxon>Pseudomonadati</taxon>
        <taxon>Pseudomonadota</taxon>
        <taxon>Gammaproteobacteria</taxon>
        <taxon>Enterobacterales</taxon>
        <taxon>Enterobacteriaceae</taxon>
        <taxon>Salmonella</taxon>
    </lineage>
</organism>
<name>RNH2_SALPB</name>
<feature type="chain" id="PRO_1000074932" description="Ribonuclease HII">
    <location>
        <begin position="1"/>
        <end position="198"/>
    </location>
</feature>
<feature type="domain" description="RNase H type-2" evidence="2">
    <location>
        <begin position="10"/>
        <end position="198"/>
    </location>
</feature>
<feature type="binding site" evidence="1">
    <location>
        <position position="16"/>
    </location>
    <ligand>
        <name>a divalent metal cation</name>
        <dbReference type="ChEBI" id="CHEBI:60240"/>
    </ligand>
</feature>
<feature type="binding site" evidence="1">
    <location>
        <position position="17"/>
    </location>
    <ligand>
        <name>a divalent metal cation</name>
        <dbReference type="ChEBI" id="CHEBI:60240"/>
    </ligand>
</feature>
<feature type="binding site" evidence="1">
    <location>
        <position position="108"/>
    </location>
    <ligand>
        <name>a divalent metal cation</name>
        <dbReference type="ChEBI" id="CHEBI:60240"/>
    </ligand>
</feature>
<reference key="1">
    <citation type="submission" date="2007-11" db="EMBL/GenBank/DDBJ databases">
        <authorList>
            <consortium name="The Salmonella enterica serovar Paratyphi B Genome Sequencing Project"/>
            <person name="McClelland M."/>
            <person name="Sanderson E.K."/>
            <person name="Porwollik S."/>
            <person name="Spieth J."/>
            <person name="Clifton W.S."/>
            <person name="Fulton R."/>
            <person name="Cordes M."/>
            <person name="Wollam A."/>
            <person name="Shah N."/>
            <person name="Pepin K."/>
            <person name="Bhonagiri V."/>
            <person name="Nash W."/>
            <person name="Johnson M."/>
            <person name="Thiruvilangam P."/>
            <person name="Wilson R."/>
        </authorList>
    </citation>
    <scope>NUCLEOTIDE SEQUENCE [LARGE SCALE GENOMIC DNA]</scope>
    <source>
        <strain>ATCC BAA-1250 / SPB7</strain>
    </source>
</reference>
<accession>A9N0T3</accession>
<keyword id="KW-0963">Cytoplasm</keyword>
<keyword id="KW-0255">Endonuclease</keyword>
<keyword id="KW-0378">Hydrolase</keyword>
<keyword id="KW-0464">Manganese</keyword>
<keyword id="KW-0479">Metal-binding</keyword>
<keyword id="KW-0540">Nuclease</keyword>
<proteinExistence type="inferred from homology"/>
<dbReference type="EC" id="3.1.26.4" evidence="1"/>
<dbReference type="EMBL" id="CP000886">
    <property type="protein sequence ID" value="ABX65735.1"/>
    <property type="molecule type" value="Genomic_DNA"/>
</dbReference>
<dbReference type="RefSeq" id="WP_000569411.1">
    <property type="nucleotide sequence ID" value="NC_010102.1"/>
</dbReference>
<dbReference type="SMR" id="A9N0T3"/>
<dbReference type="KEGG" id="spq:SPAB_00294"/>
<dbReference type="PATRIC" id="fig|1016998.12.peg.282"/>
<dbReference type="HOGENOM" id="CLU_036532_3_2_6"/>
<dbReference type="BioCyc" id="SENT1016998:SPAB_RS01190-MONOMER"/>
<dbReference type="Proteomes" id="UP000008556">
    <property type="component" value="Chromosome"/>
</dbReference>
<dbReference type="GO" id="GO:0005737">
    <property type="term" value="C:cytoplasm"/>
    <property type="evidence" value="ECO:0007669"/>
    <property type="project" value="UniProtKB-SubCell"/>
</dbReference>
<dbReference type="GO" id="GO:0032299">
    <property type="term" value="C:ribonuclease H2 complex"/>
    <property type="evidence" value="ECO:0007669"/>
    <property type="project" value="TreeGrafter"/>
</dbReference>
<dbReference type="GO" id="GO:0030145">
    <property type="term" value="F:manganese ion binding"/>
    <property type="evidence" value="ECO:0007669"/>
    <property type="project" value="UniProtKB-UniRule"/>
</dbReference>
<dbReference type="GO" id="GO:0003723">
    <property type="term" value="F:RNA binding"/>
    <property type="evidence" value="ECO:0007669"/>
    <property type="project" value="InterPro"/>
</dbReference>
<dbReference type="GO" id="GO:0004523">
    <property type="term" value="F:RNA-DNA hybrid ribonuclease activity"/>
    <property type="evidence" value="ECO:0007669"/>
    <property type="project" value="UniProtKB-UniRule"/>
</dbReference>
<dbReference type="GO" id="GO:0043137">
    <property type="term" value="P:DNA replication, removal of RNA primer"/>
    <property type="evidence" value="ECO:0007669"/>
    <property type="project" value="TreeGrafter"/>
</dbReference>
<dbReference type="GO" id="GO:0006298">
    <property type="term" value="P:mismatch repair"/>
    <property type="evidence" value="ECO:0007669"/>
    <property type="project" value="TreeGrafter"/>
</dbReference>
<dbReference type="CDD" id="cd07182">
    <property type="entry name" value="RNase_HII_bacteria_HII_like"/>
    <property type="match status" value="1"/>
</dbReference>
<dbReference type="FunFam" id="3.30.420.10:FF:000006">
    <property type="entry name" value="Ribonuclease HII"/>
    <property type="match status" value="1"/>
</dbReference>
<dbReference type="Gene3D" id="3.30.420.10">
    <property type="entry name" value="Ribonuclease H-like superfamily/Ribonuclease H"/>
    <property type="match status" value="1"/>
</dbReference>
<dbReference type="HAMAP" id="MF_00052_B">
    <property type="entry name" value="RNase_HII_B"/>
    <property type="match status" value="1"/>
</dbReference>
<dbReference type="InterPro" id="IPR022898">
    <property type="entry name" value="RNase_HII"/>
</dbReference>
<dbReference type="InterPro" id="IPR001352">
    <property type="entry name" value="RNase_HII/HIII"/>
</dbReference>
<dbReference type="InterPro" id="IPR024567">
    <property type="entry name" value="RNase_HII/HIII_dom"/>
</dbReference>
<dbReference type="InterPro" id="IPR012337">
    <property type="entry name" value="RNaseH-like_sf"/>
</dbReference>
<dbReference type="InterPro" id="IPR036397">
    <property type="entry name" value="RNaseH_sf"/>
</dbReference>
<dbReference type="NCBIfam" id="NF000594">
    <property type="entry name" value="PRK00015.1-1"/>
    <property type="match status" value="1"/>
</dbReference>
<dbReference type="NCBIfam" id="NF000595">
    <property type="entry name" value="PRK00015.1-3"/>
    <property type="match status" value="1"/>
</dbReference>
<dbReference type="NCBIfam" id="NF000596">
    <property type="entry name" value="PRK00015.1-4"/>
    <property type="match status" value="1"/>
</dbReference>
<dbReference type="PANTHER" id="PTHR10954">
    <property type="entry name" value="RIBONUCLEASE H2 SUBUNIT A"/>
    <property type="match status" value="1"/>
</dbReference>
<dbReference type="PANTHER" id="PTHR10954:SF18">
    <property type="entry name" value="RIBONUCLEASE HII"/>
    <property type="match status" value="1"/>
</dbReference>
<dbReference type="Pfam" id="PF01351">
    <property type="entry name" value="RNase_HII"/>
    <property type="match status" value="1"/>
</dbReference>
<dbReference type="SUPFAM" id="SSF53098">
    <property type="entry name" value="Ribonuclease H-like"/>
    <property type="match status" value="1"/>
</dbReference>
<dbReference type="PROSITE" id="PS51975">
    <property type="entry name" value="RNASE_H_2"/>
    <property type="match status" value="1"/>
</dbReference>
<protein>
    <recommendedName>
        <fullName evidence="1">Ribonuclease HII</fullName>
        <shortName evidence="1">RNase HII</shortName>
        <ecNumber evidence="1">3.1.26.4</ecNumber>
    </recommendedName>
</protein>
<sequence length="198" mass="21449">MIEFVYPHTHLVAGVDEVGRGPLVGAVVTAAVILDPARPIVGLNDSKKLSEKRRLSLYDEIKEKALSWSLGRAEAHEIDELNILHATMLAMQRAVAGLHIAPEYVLIDGNRCPALPVPSMAVVKGDSRVAEISAASILAKVTRDAEMAALDIVFPQYGFAQHKGYPTAFHLEKLAQYGATAHHRRSFAPVKRALGLVS</sequence>